<dbReference type="EC" id="2.7.1.33" evidence="1"/>
<dbReference type="EMBL" id="AE017333">
    <property type="protein sequence ID" value="AAU39063.1"/>
    <property type="molecule type" value="Genomic_DNA"/>
</dbReference>
<dbReference type="EMBL" id="CP000002">
    <property type="protein sequence ID" value="AAU21718.2"/>
    <property type="molecule type" value="Genomic_DNA"/>
</dbReference>
<dbReference type="RefSeq" id="WP_003178242.1">
    <property type="nucleotide sequence ID" value="NC_006322.1"/>
</dbReference>
<dbReference type="SMR" id="Q65PF1"/>
<dbReference type="STRING" id="279010.BL00853"/>
<dbReference type="KEGG" id="bld:BLi00086"/>
<dbReference type="KEGG" id="bli:BL00853"/>
<dbReference type="eggNOG" id="COG1521">
    <property type="taxonomic scope" value="Bacteria"/>
</dbReference>
<dbReference type="HOGENOM" id="CLU_066627_1_0_9"/>
<dbReference type="UniPathway" id="UPA00241">
    <property type="reaction ID" value="UER00352"/>
</dbReference>
<dbReference type="Proteomes" id="UP000000606">
    <property type="component" value="Chromosome"/>
</dbReference>
<dbReference type="GO" id="GO:0005737">
    <property type="term" value="C:cytoplasm"/>
    <property type="evidence" value="ECO:0007669"/>
    <property type="project" value="UniProtKB-SubCell"/>
</dbReference>
<dbReference type="GO" id="GO:0005524">
    <property type="term" value="F:ATP binding"/>
    <property type="evidence" value="ECO:0007669"/>
    <property type="project" value="UniProtKB-UniRule"/>
</dbReference>
<dbReference type="GO" id="GO:0046872">
    <property type="term" value="F:metal ion binding"/>
    <property type="evidence" value="ECO:0007669"/>
    <property type="project" value="UniProtKB-KW"/>
</dbReference>
<dbReference type="GO" id="GO:0004594">
    <property type="term" value="F:pantothenate kinase activity"/>
    <property type="evidence" value="ECO:0007669"/>
    <property type="project" value="UniProtKB-UniRule"/>
</dbReference>
<dbReference type="GO" id="GO:0015937">
    <property type="term" value="P:coenzyme A biosynthetic process"/>
    <property type="evidence" value="ECO:0007669"/>
    <property type="project" value="UniProtKB-UniRule"/>
</dbReference>
<dbReference type="CDD" id="cd24015">
    <property type="entry name" value="ASKHA_NBD_PanK-III"/>
    <property type="match status" value="1"/>
</dbReference>
<dbReference type="Gene3D" id="3.30.420.40">
    <property type="match status" value="2"/>
</dbReference>
<dbReference type="HAMAP" id="MF_01274">
    <property type="entry name" value="Pantothen_kinase_3"/>
    <property type="match status" value="1"/>
</dbReference>
<dbReference type="InterPro" id="IPR043129">
    <property type="entry name" value="ATPase_NBD"/>
</dbReference>
<dbReference type="InterPro" id="IPR004619">
    <property type="entry name" value="Type_III_PanK"/>
</dbReference>
<dbReference type="NCBIfam" id="TIGR00671">
    <property type="entry name" value="baf"/>
    <property type="match status" value="1"/>
</dbReference>
<dbReference type="NCBIfam" id="NF009843">
    <property type="entry name" value="PRK13318.1-1"/>
    <property type="match status" value="1"/>
</dbReference>
<dbReference type="NCBIfam" id="NF009847">
    <property type="entry name" value="PRK13318.1-5"/>
    <property type="match status" value="1"/>
</dbReference>
<dbReference type="NCBIfam" id="NF009848">
    <property type="entry name" value="PRK13318.1-6"/>
    <property type="match status" value="1"/>
</dbReference>
<dbReference type="NCBIfam" id="NF009855">
    <property type="entry name" value="PRK13321.1"/>
    <property type="match status" value="1"/>
</dbReference>
<dbReference type="PANTHER" id="PTHR34265">
    <property type="entry name" value="TYPE III PANTOTHENATE KINASE"/>
    <property type="match status" value="1"/>
</dbReference>
<dbReference type="PANTHER" id="PTHR34265:SF1">
    <property type="entry name" value="TYPE III PANTOTHENATE KINASE"/>
    <property type="match status" value="1"/>
</dbReference>
<dbReference type="Pfam" id="PF03309">
    <property type="entry name" value="Pan_kinase"/>
    <property type="match status" value="1"/>
</dbReference>
<dbReference type="SUPFAM" id="SSF53067">
    <property type="entry name" value="Actin-like ATPase domain"/>
    <property type="match status" value="2"/>
</dbReference>
<gene>
    <name evidence="1" type="primary">coaX</name>
    <name type="ordered locus">BLi00086</name>
    <name type="ordered locus">BL00853</name>
</gene>
<evidence type="ECO:0000255" key="1">
    <source>
        <dbReference type="HAMAP-Rule" id="MF_01274"/>
    </source>
</evidence>
<name>COAX_BACLD</name>
<proteinExistence type="inferred from homology"/>
<feature type="chain" id="PRO_0000267497" description="Type III pantothenate kinase">
    <location>
        <begin position="1"/>
        <end position="258"/>
    </location>
</feature>
<feature type="active site" description="Proton acceptor" evidence="1">
    <location>
        <position position="109"/>
    </location>
</feature>
<feature type="binding site" evidence="1">
    <location>
        <begin position="6"/>
        <end position="13"/>
    </location>
    <ligand>
        <name>ATP</name>
        <dbReference type="ChEBI" id="CHEBI:30616"/>
    </ligand>
</feature>
<feature type="binding site" evidence="1">
    <location>
        <position position="100"/>
    </location>
    <ligand>
        <name>substrate</name>
    </ligand>
</feature>
<feature type="binding site" evidence="1">
    <location>
        <begin position="107"/>
        <end position="110"/>
    </location>
    <ligand>
        <name>substrate</name>
    </ligand>
</feature>
<feature type="binding site" evidence="1">
    <location>
        <position position="129"/>
    </location>
    <ligand>
        <name>K(+)</name>
        <dbReference type="ChEBI" id="CHEBI:29103"/>
    </ligand>
</feature>
<feature type="binding site" evidence="1">
    <location>
        <position position="132"/>
    </location>
    <ligand>
        <name>ATP</name>
        <dbReference type="ChEBI" id="CHEBI:30616"/>
    </ligand>
</feature>
<feature type="binding site" evidence="1">
    <location>
        <position position="184"/>
    </location>
    <ligand>
        <name>substrate</name>
    </ligand>
</feature>
<reference key="1">
    <citation type="journal article" date="2004" name="J. Mol. Microbiol. Biotechnol.">
        <title>The complete genome sequence of Bacillus licheniformis DSM13, an organism with great industrial potential.</title>
        <authorList>
            <person name="Veith B."/>
            <person name="Herzberg C."/>
            <person name="Steckel S."/>
            <person name="Feesche J."/>
            <person name="Maurer K.H."/>
            <person name="Ehrenreich P."/>
            <person name="Baeumer S."/>
            <person name="Henne A."/>
            <person name="Liesegang H."/>
            <person name="Merkl R."/>
            <person name="Ehrenreich A."/>
            <person name="Gottschalk G."/>
        </authorList>
    </citation>
    <scope>NUCLEOTIDE SEQUENCE [LARGE SCALE GENOMIC DNA]</scope>
    <source>
        <strain>ATCC 14580 / DSM 13 / JCM 2505 / CCUG 7422 / NBRC 12200 / NCIMB 9375 / NCTC 10341 / NRRL NRS-1264 / Gibson 46</strain>
    </source>
</reference>
<reference key="2">
    <citation type="journal article" date="2004" name="Genome Biol.">
        <title>Complete genome sequence of the industrial bacterium Bacillus licheniformis and comparisons with closely related Bacillus species.</title>
        <authorList>
            <person name="Rey M.W."/>
            <person name="Ramaiya P."/>
            <person name="Nelson B.A."/>
            <person name="Brody-Karpin S.D."/>
            <person name="Zaretsky E.J."/>
            <person name="Tang M."/>
            <person name="Lopez de Leon A."/>
            <person name="Xiang H."/>
            <person name="Gusti V."/>
            <person name="Clausen I.G."/>
            <person name="Olsen P.B."/>
            <person name="Rasmussen M.D."/>
            <person name="Andersen J.T."/>
            <person name="Joergensen P.L."/>
            <person name="Larsen T.S."/>
            <person name="Sorokin A."/>
            <person name="Bolotin A."/>
            <person name="Lapidus A."/>
            <person name="Galleron N."/>
            <person name="Ehrlich S.D."/>
            <person name="Berka R.M."/>
        </authorList>
    </citation>
    <scope>NUCLEOTIDE SEQUENCE [LARGE SCALE GENOMIC DNA]</scope>
    <source>
        <strain>ATCC 14580 / DSM 13 / JCM 2505 / CCUG 7422 / NBRC 12200 / NCIMB 9375 / NCTC 10341 / NRRL NRS-1264 / Gibson 46</strain>
    </source>
</reference>
<keyword id="KW-0067">ATP-binding</keyword>
<keyword id="KW-0173">Coenzyme A biosynthesis</keyword>
<keyword id="KW-0963">Cytoplasm</keyword>
<keyword id="KW-0418">Kinase</keyword>
<keyword id="KW-0479">Metal-binding</keyword>
<keyword id="KW-0547">Nucleotide-binding</keyword>
<keyword id="KW-0630">Potassium</keyword>
<keyword id="KW-1185">Reference proteome</keyword>
<keyword id="KW-0808">Transferase</keyword>
<comment type="function">
    <text evidence="1">Catalyzes the phosphorylation of pantothenate (Pan), the first step in CoA biosynthesis.</text>
</comment>
<comment type="catalytic activity">
    <reaction evidence="1">
        <text>(R)-pantothenate + ATP = (R)-4'-phosphopantothenate + ADP + H(+)</text>
        <dbReference type="Rhea" id="RHEA:16373"/>
        <dbReference type="ChEBI" id="CHEBI:10986"/>
        <dbReference type="ChEBI" id="CHEBI:15378"/>
        <dbReference type="ChEBI" id="CHEBI:29032"/>
        <dbReference type="ChEBI" id="CHEBI:30616"/>
        <dbReference type="ChEBI" id="CHEBI:456216"/>
        <dbReference type="EC" id="2.7.1.33"/>
    </reaction>
</comment>
<comment type="cofactor">
    <cofactor evidence="1">
        <name>NH4(+)</name>
        <dbReference type="ChEBI" id="CHEBI:28938"/>
    </cofactor>
    <cofactor evidence="1">
        <name>K(+)</name>
        <dbReference type="ChEBI" id="CHEBI:29103"/>
    </cofactor>
    <text evidence="1">A monovalent cation. Ammonium or potassium.</text>
</comment>
<comment type="pathway">
    <text evidence="1">Cofactor biosynthesis; coenzyme A biosynthesis; CoA from (R)-pantothenate: step 1/5.</text>
</comment>
<comment type="subunit">
    <text evidence="1">Homodimer.</text>
</comment>
<comment type="subcellular location">
    <subcellularLocation>
        <location evidence="1">Cytoplasm</location>
    </subcellularLocation>
</comment>
<comment type="similarity">
    <text evidence="1">Belongs to the type III pantothenate kinase family.</text>
</comment>
<organism>
    <name type="scientific">Bacillus licheniformis (strain ATCC 14580 / DSM 13 / JCM 2505 / CCUG 7422 / NBRC 12200 / NCIMB 9375 / NCTC 10341 / NRRL NRS-1264 / Gibson 46)</name>
    <dbReference type="NCBI Taxonomy" id="279010"/>
    <lineage>
        <taxon>Bacteria</taxon>
        <taxon>Bacillati</taxon>
        <taxon>Bacillota</taxon>
        <taxon>Bacilli</taxon>
        <taxon>Bacillales</taxon>
        <taxon>Bacillaceae</taxon>
        <taxon>Bacillus</taxon>
    </lineage>
</organism>
<protein>
    <recommendedName>
        <fullName evidence="1">Type III pantothenate kinase</fullName>
        <ecNumber evidence="1">2.7.1.33</ecNumber>
    </recommendedName>
    <alternativeName>
        <fullName evidence="1">PanK-III</fullName>
    </alternativeName>
    <alternativeName>
        <fullName evidence="1">Pantothenic acid kinase</fullName>
    </alternativeName>
</protein>
<accession>Q65PF1</accession>
<accession>Q62ZU0</accession>
<sequence length="258" mass="28709">MLLVIDVGNTNTVLGIYHEGELEYHWRIETSRHKTEDEFGMLLRSLFDYVGLMFDQIEGIIISSVVPPIMFSLERMCIKYFQIEPQIVGPGMKTGLNIKYDNPKEVGADRIVNAVAAIHLYGSPLIVVDFGTATTYCYINERKEYMGGAIAPGITISTEALYSRAAKLPRIEIARPDHIVGKSTVSAMQSGILYGYVGQVEGIVKRMKWQSKKNPKVIATGGLASLIADESDCIDIVDPFLTLKGLELIYERNRVESV</sequence>